<gene>
    <name evidence="1" type="primary">miaA</name>
    <name type="ordered locus">Mjls_2149</name>
</gene>
<protein>
    <recommendedName>
        <fullName evidence="1">tRNA dimethylallyltransferase</fullName>
        <ecNumber evidence="1">2.5.1.75</ecNumber>
    </recommendedName>
    <alternativeName>
        <fullName evidence="1">Dimethylallyl diphosphate:tRNA dimethylallyltransferase</fullName>
        <shortName evidence="1">DMAPP:tRNA dimethylallyltransferase</shortName>
        <shortName evidence="1">DMATase</shortName>
    </alternativeName>
    <alternativeName>
        <fullName evidence="1">Isopentenyl-diphosphate:tRNA isopentenyltransferase</fullName>
        <shortName evidence="1">IPP transferase</shortName>
        <shortName evidence="1">IPPT</shortName>
        <shortName evidence="1">IPTase</shortName>
    </alternativeName>
</protein>
<accession>A3PYF8</accession>
<sequence length="305" mass="32805">MRPLAIIGPTGTGKSALALDVAERLGGEIGVEIVNADAMQLYRGMDIGTAKLPAAQRRGVPHHQLDVLDVTETASVARYQSEAARDIETIAARGAVPIIVGGSMMYVQALLDDWAFPATDPAVRARWEQRLVEVGVATLHGELGKVDPDAAASILPTDGRRIVRALEVVELTGQPFAASAPTIGAPRWDTAIIGLDWETSVLDERLAARTDSMFAEGLVAEVAGLLRHGLREGVTASRALGYAQVLADLDAGGDGSAAREPTFVGTRRYVRRQRSWFRRDHRVCWLDGGSPDNVDRTLRAWRAVS</sequence>
<comment type="function">
    <text evidence="1">Catalyzes the transfer of a dimethylallyl group onto the adenine at position 37 in tRNAs that read codons beginning with uridine, leading to the formation of N6-(dimethylallyl)adenosine (i(6)A).</text>
</comment>
<comment type="catalytic activity">
    <reaction evidence="1">
        <text>adenosine(37) in tRNA + dimethylallyl diphosphate = N(6)-dimethylallyladenosine(37) in tRNA + diphosphate</text>
        <dbReference type="Rhea" id="RHEA:26482"/>
        <dbReference type="Rhea" id="RHEA-COMP:10162"/>
        <dbReference type="Rhea" id="RHEA-COMP:10375"/>
        <dbReference type="ChEBI" id="CHEBI:33019"/>
        <dbReference type="ChEBI" id="CHEBI:57623"/>
        <dbReference type="ChEBI" id="CHEBI:74411"/>
        <dbReference type="ChEBI" id="CHEBI:74415"/>
        <dbReference type="EC" id="2.5.1.75"/>
    </reaction>
</comment>
<comment type="cofactor">
    <cofactor evidence="1">
        <name>Mg(2+)</name>
        <dbReference type="ChEBI" id="CHEBI:18420"/>
    </cofactor>
</comment>
<comment type="subunit">
    <text evidence="1">Monomer.</text>
</comment>
<comment type="similarity">
    <text evidence="1">Belongs to the IPP transferase family.</text>
</comment>
<name>MIAA_MYCSJ</name>
<reference key="1">
    <citation type="submission" date="2007-02" db="EMBL/GenBank/DDBJ databases">
        <title>Complete sequence of Mycobacterium sp. JLS.</title>
        <authorList>
            <consortium name="US DOE Joint Genome Institute"/>
            <person name="Copeland A."/>
            <person name="Lucas S."/>
            <person name="Lapidus A."/>
            <person name="Barry K."/>
            <person name="Detter J.C."/>
            <person name="Glavina del Rio T."/>
            <person name="Hammon N."/>
            <person name="Israni S."/>
            <person name="Dalin E."/>
            <person name="Tice H."/>
            <person name="Pitluck S."/>
            <person name="Chain P."/>
            <person name="Malfatti S."/>
            <person name="Shin M."/>
            <person name="Vergez L."/>
            <person name="Schmutz J."/>
            <person name="Larimer F."/>
            <person name="Land M."/>
            <person name="Hauser L."/>
            <person name="Kyrpides N."/>
            <person name="Mikhailova N."/>
            <person name="Miller C.D."/>
            <person name="Anderson A.J."/>
            <person name="Sims R.C."/>
            <person name="Richardson P."/>
        </authorList>
    </citation>
    <scope>NUCLEOTIDE SEQUENCE [LARGE SCALE GENOMIC DNA]</scope>
    <source>
        <strain>JLS</strain>
    </source>
</reference>
<dbReference type="EC" id="2.5.1.75" evidence="1"/>
<dbReference type="EMBL" id="CP000580">
    <property type="protein sequence ID" value="ABN97935.1"/>
    <property type="molecule type" value="Genomic_DNA"/>
</dbReference>
<dbReference type="SMR" id="A3PYF8"/>
<dbReference type="KEGG" id="mjl:Mjls_2149"/>
<dbReference type="HOGENOM" id="CLU_032616_0_1_11"/>
<dbReference type="BioCyc" id="MSP164757:G1G8C-2169-MONOMER"/>
<dbReference type="GO" id="GO:0005524">
    <property type="term" value="F:ATP binding"/>
    <property type="evidence" value="ECO:0007669"/>
    <property type="project" value="UniProtKB-UniRule"/>
</dbReference>
<dbReference type="GO" id="GO:0052381">
    <property type="term" value="F:tRNA dimethylallyltransferase activity"/>
    <property type="evidence" value="ECO:0007669"/>
    <property type="project" value="UniProtKB-UniRule"/>
</dbReference>
<dbReference type="GO" id="GO:0006400">
    <property type="term" value="P:tRNA modification"/>
    <property type="evidence" value="ECO:0007669"/>
    <property type="project" value="TreeGrafter"/>
</dbReference>
<dbReference type="FunFam" id="1.10.20.140:FF:000001">
    <property type="entry name" value="tRNA dimethylallyltransferase"/>
    <property type="match status" value="1"/>
</dbReference>
<dbReference type="Gene3D" id="1.10.20.140">
    <property type="match status" value="1"/>
</dbReference>
<dbReference type="Gene3D" id="3.40.50.300">
    <property type="entry name" value="P-loop containing nucleotide triphosphate hydrolases"/>
    <property type="match status" value="1"/>
</dbReference>
<dbReference type="HAMAP" id="MF_00185">
    <property type="entry name" value="IPP_trans"/>
    <property type="match status" value="1"/>
</dbReference>
<dbReference type="InterPro" id="IPR039657">
    <property type="entry name" value="Dimethylallyltransferase"/>
</dbReference>
<dbReference type="InterPro" id="IPR018022">
    <property type="entry name" value="IPT"/>
</dbReference>
<dbReference type="InterPro" id="IPR027417">
    <property type="entry name" value="P-loop_NTPase"/>
</dbReference>
<dbReference type="NCBIfam" id="TIGR00174">
    <property type="entry name" value="miaA"/>
    <property type="match status" value="1"/>
</dbReference>
<dbReference type="PANTHER" id="PTHR11088">
    <property type="entry name" value="TRNA DIMETHYLALLYLTRANSFERASE"/>
    <property type="match status" value="1"/>
</dbReference>
<dbReference type="PANTHER" id="PTHR11088:SF60">
    <property type="entry name" value="TRNA DIMETHYLALLYLTRANSFERASE"/>
    <property type="match status" value="1"/>
</dbReference>
<dbReference type="Pfam" id="PF01715">
    <property type="entry name" value="IPPT"/>
    <property type="match status" value="1"/>
</dbReference>
<dbReference type="SUPFAM" id="SSF52540">
    <property type="entry name" value="P-loop containing nucleoside triphosphate hydrolases"/>
    <property type="match status" value="1"/>
</dbReference>
<organism>
    <name type="scientific">Mycobacterium sp. (strain JLS)</name>
    <dbReference type="NCBI Taxonomy" id="164757"/>
    <lineage>
        <taxon>Bacteria</taxon>
        <taxon>Bacillati</taxon>
        <taxon>Actinomycetota</taxon>
        <taxon>Actinomycetes</taxon>
        <taxon>Mycobacteriales</taxon>
        <taxon>Mycobacteriaceae</taxon>
        <taxon>Mycobacterium</taxon>
    </lineage>
</organism>
<keyword id="KW-0067">ATP-binding</keyword>
<keyword id="KW-0460">Magnesium</keyword>
<keyword id="KW-0547">Nucleotide-binding</keyword>
<keyword id="KW-0808">Transferase</keyword>
<keyword id="KW-0819">tRNA processing</keyword>
<proteinExistence type="inferred from homology"/>
<feature type="chain" id="PRO_0000377229" description="tRNA dimethylallyltransferase">
    <location>
        <begin position="1"/>
        <end position="305"/>
    </location>
</feature>
<feature type="binding site" evidence="1">
    <location>
        <begin position="8"/>
        <end position="15"/>
    </location>
    <ligand>
        <name>ATP</name>
        <dbReference type="ChEBI" id="CHEBI:30616"/>
    </ligand>
</feature>
<feature type="binding site" evidence="1">
    <location>
        <begin position="10"/>
        <end position="15"/>
    </location>
    <ligand>
        <name>substrate</name>
    </ligand>
</feature>
<feature type="site" description="Interaction with substrate tRNA" evidence="1">
    <location>
        <position position="103"/>
    </location>
</feature>
<feature type="site" description="Interaction with substrate tRNA" evidence="1">
    <location>
        <position position="124"/>
    </location>
</feature>
<evidence type="ECO:0000255" key="1">
    <source>
        <dbReference type="HAMAP-Rule" id="MF_00185"/>
    </source>
</evidence>